<feature type="chain" id="PRO_1000137449" description="Phosphatidylglycerol--prolipoprotein diacylglyceryl transferase">
    <location>
        <begin position="1"/>
        <end position="277"/>
    </location>
</feature>
<feature type="transmembrane region" description="Helical" evidence="1">
    <location>
        <begin position="16"/>
        <end position="36"/>
    </location>
</feature>
<feature type="transmembrane region" description="Helical" evidence="1">
    <location>
        <begin position="58"/>
        <end position="78"/>
    </location>
</feature>
<feature type="transmembrane region" description="Helical" evidence="1">
    <location>
        <begin position="93"/>
        <end position="113"/>
    </location>
</feature>
<feature type="transmembrane region" description="Helical" evidence="1">
    <location>
        <begin position="119"/>
        <end position="139"/>
    </location>
</feature>
<feature type="transmembrane region" description="Helical" evidence="1">
    <location>
        <begin position="182"/>
        <end position="202"/>
    </location>
</feature>
<feature type="transmembrane region" description="Helical" evidence="1">
    <location>
        <begin position="207"/>
        <end position="227"/>
    </location>
</feature>
<feature type="transmembrane region" description="Helical" evidence="1">
    <location>
        <begin position="239"/>
        <end position="259"/>
    </location>
</feature>
<feature type="binding site" evidence="1">
    <location>
        <position position="141"/>
    </location>
    <ligand>
        <name>a 1,2-diacyl-sn-glycero-3-phospho-(1'-sn-glycerol)</name>
        <dbReference type="ChEBI" id="CHEBI:64716"/>
    </ligand>
</feature>
<name>LGT_RHOCS</name>
<comment type="function">
    <text evidence="1">Catalyzes the transfer of the diacylglyceryl group from phosphatidylglycerol to the sulfhydryl group of the N-terminal cysteine of a prolipoprotein, the first step in the formation of mature lipoproteins.</text>
</comment>
<comment type="catalytic activity">
    <reaction evidence="1">
        <text>L-cysteinyl-[prolipoprotein] + a 1,2-diacyl-sn-glycero-3-phospho-(1'-sn-glycerol) = an S-1,2-diacyl-sn-glyceryl-L-cysteinyl-[prolipoprotein] + sn-glycerol 1-phosphate + H(+)</text>
        <dbReference type="Rhea" id="RHEA:56712"/>
        <dbReference type="Rhea" id="RHEA-COMP:14679"/>
        <dbReference type="Rhea" id="RHEA-COMP:14680"/>
        <dbReference type="ChEBI" id="CHEBI:15378"/>
        <dbReference type="ChEBI" id="CHEBI:29950"/>
        <dbReference type="ChEBI" id="CHEBI:57685"/>
        <dbReference type="ChEBI" id="CHEBI:64716"/>
        <dbReference type="ChEBI" id="CHEBI:140658"/>
        <dbReference type="EC" id="2.5.1.145"/>
    </reaction>
</comment>
<comment type="pathway">
    <text evidence="1">Protein modification; lipoprotein biosynthesis (diacylglyceryl transfer).</text>
</comment>
<comment type="subcellular location">
    <subcellularLocation>
        <location evidence="1">Cell inner membrane</location>
        <topology evidence="1">Multi-pass membrane protein</topology>
    </subcellularLocation>
</comment>
<comment type="similarity">
    <text evidence="1">Belongs to the Lgt family.</text>
</comment>
<sequence length="277" mass="29840">MSGIPFPAIDPVAVELGPIVIRWYALAYLAGFLFGWWYCTRLARAIPGRPTPDDLSEFLTWAIVGVLLGGRLGFVLFYNLDYYIQHPLQALAIWSGGMSFHGGLTGIVAAILLYGWRHGFSPFALGDLVAVAGPVGLFLGRIANFVNGELWGRPAPDLPWAVIFPDPRAGGVPRHPSQLYEAALEGLVLFAVLAWLASKPAVRERTGTLSGTFLVGYGIARILGEVFREPDVQIGYLAFGVTMGQILSVPMVLIGLWILVRAPFGPVRTPAAAAAGR</sequence>
<evidence type="ECO:0000255" key="1">
    <source>
        <dbReference type="HAMAP-Rule" id="MF_01147"/>
    </source>
</evidence>
<gene>
    <name evidence="1" type="primary">lgt</name>
    <name type="ordered locus">RC1_1902</name>
</gene>
<dbReference type="EC" id="2.5.1.145" evidence="1"/>
<dbReference type="EMBL" id="CP000613">
    <property type="protein sequence ID" value="ACI99298.1"/>
    <property type="molecule type" value="Genomic_DNA"/>
</dbReference>
<dbReference type="RefSeq" id="WP_012567083.1">
    <property type="nucleotide sequence ID" value="NC_011420.2"/>
</dbReference>
<dbReference type="SMR" id="B6ITJ7"/>
<dbReference type="STRING" id="414684.RC1_1902"/>
<dbReference type="KEGG" id="rce:RC1_1902"/>
<dbReference type="eggNOG" id="COG0682">
    <property type="taxonomic scope" value="Bacteria"/>
</dbReference>
<dbReference type="HOGENOM" id="CLU_013386_1_0_5"/>
<dbReference type="OrthoDB" id="871140at2"/>
<dbReference type="UniPathway" id="UPA00664"/>
<dbReference type="Proteomes" id="UP000001591">
    <property type="component" value="Chromosome"/>
</dbReference>
<dbReference type="GO" id="GO:0005886">
    <property type="term" value="C:plasma membrane"/>
    <property type="evidence" value="ECO:0007669"/>
    <property type="project" value="UniProtKB-SubCell"/>
</dbReference>
<dbReference type="GO" id="GO:0008961">
    <property type="term" value="F:phosphatidylglycerol-prolipoprotein diacylglyceryl transferase activity"/>
    <property type="evidence" value="ECO:0007669"/>
    <property type="project" value="UniProtKB-UniRule"/>
</dbReference>
<dbReference type="GO" id="GO:0042158">
    <property type="term" value="P:lipoprotein biosynthetic process"/>
    <property type="evidence" value="ECO:0007669"/>
    <property type="project" value="UniProtKB-UniRule"/>
</dbReference>
<dbReference type="HAMAP" id="MF_01147">
    <property type="entry name" value="Lgt"/>
    <property type="match status" value="1"/>
</dbReference>
<dbReference type="InterPro" id="IPR001640">
    <property type="entry name" value="Lgt"/>
</dbReference>
<dbReference type="NCBIfam" id="TIGR00544">
    <property type="entry name" value="lgt"/>
    <property type="match status" value="1"/>
</dbReference>
<dbReference type="PANTHER" id="PTHR30589:SF0">
    <property type="entry name" value="PHOSPHATIDYLGLYCEROL--PROLIPOPROTEIN DIACYLGLYCERYL TRANSFERASE"/>
    <property type="match status" value="1"/>
</dbReference>
<dbReference type="PANTHER" id="PTHR30589">
    <property type="entry name" value="PROLIPOPROTEIN DIACYLGLYCERYL TRANSFERASE"/>
    <property type="match status" value="1"/>
</dbReference>
<dbReference type="Pfam" id="PF01790">
    <property type="entry name" value="LGT"/>
    <property type="match status" value="1"/>
</dbReference>
<dbReference type="PROSITE" id="PS01311">
    <property type="entry name" value="LGT"/>
    <property type="match status" value="1"/>
</dbReference>
<protein>
    <recommendedName>
        <fullName evidence="1">Phosphatidylglycerol--prolipoprotein diacylglyceryl transferase</fullName>
        <ecNumber evidence="1">2.5.1.145</ecNumber>
    </recommendedName>
</protein>
<reference key="1">
    <citation type="submission" date="2007-03" db="EMBL/GenBank/DDBJ databases">
        <title>Genome sequence of Rhodospirillum centenum.</title>
        <authorList>
            <person name="Touchman J.W."/>
            <person name="Bauer C."/>
            <person name="Blankenship R.E."/>
        </authorList>
    </citation>
    <scope>NUCLEOTIDE SEQUENCE [LARGE SCALE GENOMIC DNA]</scope>
    <source>
        <strain>ATCC 51521 / SW</strain>
    </source>
</reference>
<organism>
    <name type="scientific">Rhodospirillum centenum (strain ATCC 51521 / SW)</name>
    <dbReference type="NCBI Taxonomy" id="414684"/>
    <lineage>
        <taxon>Bacteria</taxon>
        <taxon>Pseudomonadati</taxon>
        <taxon>Pseudomonadota</taxon>
        <taxon>Alphaproteobacteria</taxon>
        <taxon>Rhodospirillales</taxon>
        <taxon>Rhodospirillaceae</taxon>
        <taxon>Rhodospirillum</taxon>
    </lineage>
</organism>
<keyword id="KW-0997">Cell inner membrane</keyword>
<keyword id="KW-1003">Cell membrane</keyword>
<keyword id="KW-0472">Membrane</keyword>
<keyword id="KW-1185">Reference proteome</keyword>
<keyword id="KW-0808">Transferase</keyword>
<keyword id="KW-0812">Transmembrane</keyword>
<keyword id="KW-1133">Transmembrane helix</keyword>
<accession>B6ITJ7</accession>
<proteinExistence type="inferred from homology"/>